<name>RL6_BURCJ</name>
<feature type="chain" id="PRO_1000143953" description="Large ribosomal subunit protein uL6">
    <location>
        <begin position="1"/>
        <end position="176"/>
    </location>
</feature>
<gene>
    <name evidence="1" type="primary">rplF</name>
    <name type="ordered locus">BceJ2315_02520</name>
    <name type="ORF">BCAL0249</name>
</gene>
<dbReference type="EMBL" id="AM747720">
    <property type="protein sequence ID" value="CAR50560.1"/>
    <property type="molecule type" value="Genomic_DNA"/>
</dbReference>
<dbReference type="RefSeq" id="WP_006477184.1">
    <property type="nucleotide sequence ID" value="NC_011000.1"/>
</dbReference>
<dbReference type="SMR" id="B4E5D5"/>
<dbReference type="GeneID" id="83047146"/>
<dbReference type="KEGG" id="bcj:BCAL0249"/>
<dbReference type="eggNOG" id="COG0097">
    <property type="taxonomic scope" value="Bacteria"/>
</dbReference>
<dbReference type="HOGENOM" id="CLU_065464_1_2_4"/>
<dbReference type="BioCyc" id="BCEN216591:G1G1V-292-MONOMER"/>
<dbReference type="Proteomes" id="UP000001035">
    <property type="component" value="Chromosome 1"/>
</dbReference>
<dbReference type="GO" id="GO:0022625">
    <property type="term" value="C:cytosolic large ribosomal subunit"/>
    <property type="evidence" value="ECO:0007669"/>
    <property type="project" value="TreeGrafter"/>
</dbReference>
<dbReference type="GO" id="GO:0019843">
    <property type="term" value="F:rRNA binding"/>
    <property type="evidence" value="ECO:0007669"/>
    <property type="project" value="UniProtKB-UniRule"/>
</dbReference>
<dbReference type="GO" id="GO:0003735">
    <property type="term" value="F:structural constituent of ribosome"/>
    <property type="evidence" value="ECO:0007669"/>
    <property type="project" value="InterPro"/>
</dbReference>
<dbReference type="GO" id="GO:0002181">
    <property type="term" value="P:cytoplasmic translation"/>
    <property type="evidence" value="ECO:0007669"/>
    <property type="project" value="TreeGrafter"/>
</dbReference>
<dbReference type="FunFam" id="3.90.930.12:FF:000001">
    <property type="entry name" value="50S ribosomal protein L6"/>
    <property type="match status" value="1"/>
</dbReference>
<dbReference type="Gene3D" id="3.90.930.12">
    <property type="entry name" value="Ribosomal protein L6, alpha-beta domain"/>
    <property type="match status" value="2"/>
</dbReference>
<dbReference type="HAMAP" id="MF_01365_B">
    <property type="entry name" value="Ribosomal_uL6_B"/>
    <property type="match status" value="1"/>
</dbReference>
<dbReference type="InterPro" id="IPR000702">
    <property type="entry name" value="Ribosomal_uL6-like"/>
</dbReference>
<dbReference type="InterPro" id="IPR036789">
    <property type="entry name" value="Ribosomal_uL6-like_a/b-dom_sf"/>
</dbReference>
<dbReference type="InterPro" id="IPR020040">
    <property type="entry name" value="Ribosomal_uL6_a/b-dom"/>
</dbReference>
<dbReference type="InterPro" id="IPR019906">
    <property type="entry name" value="Ribosomal_uL6_bac-type"/>
</dbReference>
<dbReference type="InterPro" id="IPR002358">
    <property type="entry name" value="Ribosomal_uL6_CS"/>
</dbReference>
<dbReference type="NCBIfam" id="TIGR03654">
    <property type="entry name" value="L6_bact"/>
    <property type="match status" value="1"/>
</dbReference>
<dbReference type="PANTHER" id="PTHR11655">
    <property type="entry name" value="60S/50S RIBOSOMAL PROTEIN L6/L9"/>
    <property type="match status" value="1"/>
</dbReference>
<dbReference type="PANTHER" id="PTHR11655:SF14">
    <property type="entry name" value="LARGE RIBOSOMAL SUBUNIT PROTEIN UL6M"/>
    <property type="match status" value="1"/>
</dbReference>
<dbReference type="Pfam" id="PF00347">
    <property type="entry name" value="Ribosomal_L6"/>
    <property type="match status" value="2"/>
</dbReference>
<dbReference type="PIRSF" id="PIRSF002162">
    <property type="entry name" value="Ribosomal_L6"/>
    <property type="match status" value="1"/>
</dbReference>
<dbReference type="PRINTS" id="PR00059">
    <property type="entry name" value="RIBOSOMALL6"/>
</dbReference>
<dbReference type="SUPFAM" id="SSF56053">
    <property type="entry name" value="Ribosomal protein L6"/>
    <property type="match status" value="2"/>
</dbReference>
<dbReference type="PROSITE" id="PS00525">
    <property type="entry name" value="RIBOSOMAL_L6_1"/>
    <property type="match status" value="1"/>
</dbReference>
<keyword id="KW-0687">Ribonucleoprotein</keyword>
<keyword id="KW-0689">Ribosomal protein</keyword>
<keyword id="KW-0694">RNA-binding</keyword>
<keyword id="KW-0699">rRNA-binding</keyword>
<reference key="1">
    <citation type="journal article" date="2009" name="J. Bacteriol.">
        <title>The genome of Burkholderia cenocepacia J2315, an epidemic pathogen of cystic fibrosis patients.</title>
        <authorList>
            <person name="Holden M.T."/>
            <person name="Seth-Smith H.M."/>
            <person name="Crossman L.C."/>
            <person name="Sebaihia M."/>
            <person name="Bentley S.D."/>
            <person name="Cerdeno-Tarraga A.M."/>
            <person name="Thomson N.R."/>
            <person name="Bason N."/>
            <person name="Quail M.A."/>
            <person name="Sharp S."/>
            <person name="Cherevach I."/>
            <person name="Churcher C."/>
            <person name="Goodhead I."/>
            <person name="Hauser H."/>
            <person name="Holroyd N."/>
            <person name="Mungall K."/>
            <person name="Scott P."/>
            <person name="Walker D."/>
            <person name="White B."/>
            <person name="Rose H."/>
            <person name="Iversen P."/>
            <person name="Mil-Homens D."/>
            <person name="Rocha E.P."/>
            <person name="Fialho A.M."/>
            <person name="Baldwin A."/>
            <person name="Dowson C."/>
            <person name="Barrell B.G."/>
            <person name="Govan J.R."/>
            <person name="Vandamme P."/>
            <person name="Hart C.A."/>
            <person name="Mahenthiralingam E."/>
            <person name="Parkhill J."/>
        </authorList>
    </citation>
    <scope>NUCLEOTIDE SEQUENCE [LARGE SCALE GENOMIC DNA]</scope>
    <source>
        <strain>ATCC BAA-245 / DSM 16553 / LMG 16656 / NCTC 13227 / J2315 / CF5610</strain>
    </source>
</reference>
<protein>
    <recommendedName>
        <fullName evidence="1">Large ribosomal subunit protein uL6</fullName>
    </recommendedName>
    <alternativeName>
        <fullName evidence="2">50S ribosomal protein L6</fullName>
    </alternativeName>
</protein>
<evidence type="ECO:0000255" key="1">
    <source>
        <dbReference type="HAMAP-Rule" id="MF_01365"/>
    </source>
</evidence>
<evidence type="ECO:0000305" key="2"/>
<organism>
    <name type="scientific">Burkholderia cenocepacia (strain ATCC BAA-245 / DSM 16553 / LMG 16656 / NCTC 13227 / J2315 / CF5610)</name>
    <name type="common">Burkholderia cepacia (strain J2315)</name>
    <dbReference type="NCBI Taxonomy" id="216591"/>
    <lineage>
        <taxon>Bacteria</taxon>
        <taxon>Pseudomonadati</taxon>
        <taxon>Pseudomonadota</taxon>
        <taxon>Betaproteobacteria</taxon>
        <taxon>Burkholderiales</taxon>
        <taxon>Burkholderiaceae</taxon>
        <taxon>Burkholderia</taxon>
        <taxon>Burkholderia cepacia complex</taxon>
    </lineage>
</organism>
<comment type="function">
    <text evidence="1">This protein binds to the 23S rRNA, and is important in its secondary structure. It is located near the subunit interface in the base of the L7/L12 stalk, and near the tRNA binding site of the peptidyltransferase center.</text>
</comment>
<comment type="subunit">
    <text evidence="1">Part of the 50S ribosomal subunit.</text>
</comment>
<comment type="similarity">
    <text evidence="1">Belongs to the universal ribosomal protein uL6 family.</text>
</comment>
<accession>B4E5D5</accession>
<sequence>MSRVGKSPIALQGAEVKLADGAITVKGPLGTITQAINPLVNVANNDGTLNLSPVDESREANALSGTMRAIIANAVHGVTKGFERKLTLVGVGYRAQAQGDKLNLSLGFSHPVVHQMPEGVKAETPTQTEIVIKGINKQQVGQVAAEVRGYRPPEPYKGKGVRYADEVVILKETKKK</sequence>
<proteinExistence type="inferred from homology"/>